<name>YQGF_CORA7</name>
<protein>
    <recommendedName>
        <fullName evidence="1">Putative pre-16S rRNA nuclease</fullName>
        <ecNumber evidence="1">3.1.-.-</ecNumber>
    </recommendedName>
</protein>
<proteinExistence type="inferred from homology"/>
<reference key="1">
    <citation type="journal article" date="2010" name="BMC Genomics">
        <title>Complete genome sequence and lifestyle of black-pigmented Corynebacterium aurimucosum ATCC 700975 (formerly C. nigricans CN-1) isolated from a vaginal swab of a woman with spontaneous abortion.</title>
        <authorList>
            <person name="Trost E."/>
            <person name="Gotker S."/>
            <person name="Schneider J."/>
            <person name="Schneiker-Bekel S."/>
            <person name="Szczepanowski R."/>
            <person name="Tilker A."/>
            <person name="Viehoever P."/>
            <person name="Arnold W."/>
            <person name="Bekel T."/>
            <person name="Blom J."/>
            <person name="Gartemann K.H."/>
            <person name="Linke B."/>
            <person name="Goesmann A."/>
            <person name="Puhler A."/>
            <person name="Shukla S.K."/>
            <person name="Tauch A."/>
        </authorList>
    </citation>
    <scope>NUCLEOTIDE SEQUENCE [LARGE SCALE GENOMIC DNA]</scope>
    <source>
        <strain>ATCC 700975 / DSM 44827 / CIP 107346 / CN-1</strain>
    </source>
</reference>
<organism>
    <name type="scientific">Corynebacterium aurimucosum (strain ATCC 700975 / DSM 44827 / CIP 107346 / CN-1)</name>
    <name type="common">Corynebacterium nigricans</name>
    <dbReference type="NCBI Taxonomy" id="548476"/>
    <lineage>
        <taxon>Bacteria</taxon>
        <taxon>Bacillati</taxon>
        <taxon>Actinomycetota</taxon>
        <taxon>Actinomycetes</taxon>
        <taxon>Mycobacteriales</taxon>
        <taxon>Corynebacteriaceae</taxon>
        <taxon>Corynebacterium</taxon>
    </lineage>
</organism>
<keyword id="KW-0963">Cytoplasm</keyword>
<keyword id="KW-0378">Hydrolase</keyword>
<keyword id="KW-0540">Nuclease</keyword>
<keyword id="KW-1185">Reference proteome</keyword>
<keyword id="KW-0690">Ribosome biogenesis</keyword>
<gene>
    <name type="ordered locus">cauri_1392</name>
</gene>
<sequence>MAVEPDKPGVDDPGPGRRLGLDVGTVRIGVAVSDRDARLAMPVETVRRETGFKDRDKDDIDRLLDLIHEYDAVEVAVGLPRDLKGNGSSSVKHAKEIAFRIRRRLAKDDRMKEPPPVRMVDERLTTVVATSALRASGVSEKRGRSVIDQAAAVEILQSWLDARHFALNGHSPSNVGDEVREP</sequence>
<evidence type="ECO:0000255" key="1">
    <source>
        <dbReference type="HAMAP-Rule" id="MF_00651"/>
    </source>
</evidence>
<dbReference type="EC" id="3.1.-.-" evidence="1"/>
<dbReference type="EMBL" id="CP001601">
    <property type="protein sequence ID" value="ACP32985.1"/>
    <property type="molecule type" value="Genomic_DNA"/>
</dbReference>
<dbReference type="RefSeq" id="WP_010190141.1">
    <property type="nucleotide sequence ID" value="NC_012590.1"/>
</dbReference>
<dbReference type="SMR" id="C3PGN1"/>
<dbReference type="STRING" id="548476.cauri_1392"/>
<dbReference type="GeneID" id="31924018"/>
<dbReference type="KEGG" id="car:cauri_1392"/>
<dbReference type="eggNOG" id="COG0816">
    <property type="taxonomic scope" value="Bacteria"/>
</dbReference>
<dbReference type="HOGENOM" id="CLU_098240_0_1_11"/>
<dbReference type="OrthoDB" id="9790539at2"/>
<dbReference type="Proteomes" id="UP000002077">
    <property type="component" value="Chromosome"/>
</dbReference>
<dbReference type="GO" id="GO:0005829">
    <property type="term" value="C:cytosol"/>
    <property type="evidence" value="ECO:0007669"/>
    <property type="project" value="TreeGrafter"/>
</dbReference>
<dbReference type="GO" id="GO:0004518">
    <property type="term" value="F:nuclease activity"/>
    <property type="evidence" value="ECO:0007669"/>
    <property type="project" value="UniProtKB-KW"/>
</dbReference>
<dbReference type="GO" id="GO:0000967">
    <property type="term" value="P:rRNA 5'-end processing"/>
    <property type="evidence" value="ECO:0007669"/>
    <property type="project" value="UniProtKB-UniRule"/>
</dbReference>
<dbReference type="CDD" id="cd16964">
    <property type="entry name" value="YqgF"/>
    <property type="match status" value="1"/>
</dbReference>
<dbReference type="Gene3D" id="3.30.420.140">
    <property type="entry name" value="YqgF/RNase H-like domain"/>
    <property type="match status" value="1"/>
</dbReference>
<dbReference type="HAMAP" id="MF_00651">
    <property type="entry name" value="Nuclease_YqgF"/>
    <property type="match status" value="1"/>
</dbReference>
<dbReference type="InterPro" id="IPR012337">
    <property type="entry name" value="RNaseH-like_sf"/>
</dbReference>
<dbReference type="InterPro" id="IPR005227">
    <property type="entry name" value="YqgF"/>
</dbReference>
<dbReference type="InterPro" id="IPR006641">
    <property type="entry name" value="YqgF/RNaseH-like_dom"/>
</dbReference>
<dbReference type="InterPro" id="IPR037027">
    <property type="entry name" value="YqgF/RNaseH-like_dom_sf"/>
</dbReference>
<dbReference type="NCBIfam" id="TIGR00250">
    <property type="entry name" value="RNAse_H_YqgF"/>
    <property type="match status" value="1"/>
</dbReference>
<dbReference type="PANTHER" id="PTHR33317">
    <property type="entry name" value="POLYNUCLEOTIDYL TRANSFERASE, RIBONUCLEASE H-LIKE SUPERFAMILY PROTEIN"/>
    <property type="match status" value="1"/>
</dbReference>
<dbReference type="PANTHER" id="PTHR33317:SF4">
    <property type="entry name" value="POLYNUCLEOTIDYL TRANSFERASE, RIBONUCLEASE H-LIKE SUPERFAMILY PROTEIN"/>
    <property type="match status" value="1"/>
</dbReference>
<dbReference type="Pfam" id="PF03652">
    <property type="entry name" value="RuvX"/>
    <property type="match status" value="1"/>
</dbReference>
<dbReference type="SMART" id="SM00732">
    <property type="entry name" value="YqgFc"/>
    <property type="match status" value="1"/>
</dbReference>
<dbReference type="SUPFAM" id="SSF53098">
    <property type="entry name" value="Ribonuclease H-like"/>
    <property type="match status" value="1"/>
</dbReference>
<accession>C3PGN1</accession>
<comment type="function">
    <text evidence="1">Could be a nuclease involved in processing of the 5'-end of pre-16S rRNA.</text>
</comment>
<comment type="subcellular location">
    <subcellularLocation>
        <location evidence="1">Cytoplasm</location>
    </subcellularLocation>
</comment>
<comment type="similarity">
    <text evidence="1">Belongs to the YqgF nuclease family.</text>
</comment>
<feature type="chain" id="PRO_1000147475" description="Putative pre-16S rRNA nuclease">
    <location>
        <begin position="1"/>
        <end position="182"/>
    </location>
</feature>